<keyword id="KW-0997">Cell inner membrane</keyword>
<keyword id="KW-1003">Cell membrane</keyword>
<keyword id="KW-0350">Heme biosynthesis</keyword>
<keyword id="KW-0472">Membrane</keyword>
<keyword id="KW-0808">Transferase</keyword>
<keyword id="KW-0812">Transmembrane</keyword>
<keyword id="KW-1133">Transmembrane helix</keyword>
<sequence>MSVVESHDIEFAAPRISEASVADYIALLKPRVMSLVIFTALVGLLLAPGYIHPVLAFTSILCIAVGAGASGALNMWYEDDIDAKMTRTANRPIPRGRVSKPEALTFGLVLSFFSVVTLGILVNWFAAALLAFTIFFYVVIYTIWLKRWTAQNIVIGGAAGALPPVVAWAAAAGSLSVEPMLLFAIIFFWTPPHFWALALFRAGDYANAGVPMLPVTAGPDATRLSILLYTIVLVAVAFAPWPLGYFDAIYGITSLALGGWMLLLTLRVYRLRHGSAALRASRSLFKFSILYLFALFAVLLLEVIVRGVIGALA</sequence>
<comment type="function">
    <text evidence="1">Converts heme B (protoheme IX) to heme O by substitution of the vinyl group on carbon 2 of heme B porphyrin ring with a hydroxyethyl farnesyl side group.</text>
</comment>
<comment type="catalytic activity">
    <reaction evidence="1">
        <text>heme b + (2E,6E)-farnesyl diphosphate + H2O = Fe(II)-heme o + diphosphate</text>
        <dbReference type="Rhea" id="RHEA:28070"/>
        <dbReference type="ChEBI" id="CHEBI:15377"/>
        <dbReference type="ChEBI" id="CHEBI:33019"/>
        <dbReference type="ChEBI" id="CHEBI:60344"/>
        <dbReference type="ChEBI" id="CHEBI:60530"/>
        <dbReference type="ChEBI" id="CHEBI:175763"/>
        <dbReference type="EC" id="2.5.1.141"/>
    </reaction>
</comment>
<comment type="pathway">
    <text evidence="1">Porphyrin-containing compound metabolism; heme O biosynthesis; heme O from protoheme: step 1/1.</text>
</comment>
<comment type="subcellular location">
    <subcellularLocation>
        <location evidence="1">Cell inner membrane</location>
        <topology evidence="1">Multi-pass membrane protein</topology>
    </subcellularLocation>
</comment>
<comment type="miscellaneous">
    <text evidence="1">Carbon 2 of the heme B porphyrin ring is defined according to the Fischer nomenclature.</text>
</comment>
<comment type="similarity">
    <text evidence="1">Belongs to the UbiA prenyltransferase family. Protoheme IX farnesyltransferase subfamily.</text>
</comment>
<organism>
    <name type="scientific">Rhodopseudomonas palustris (strain BisB18)</name>
    <dbReference type="NCBI Taxonomy" id="316056"/>
    <lineage>
        <taxon>Bacteria</taxon>
        <taxon>Pseudomonadati</taxon>
        <taxon>Pseudomonadota</taxon>
        <taxon>Alphaproteobacteria</taxon>
        <taxon>Hyphomicrobiales</taxon>
        <taxon>Nitrobacteraceae</taxon>
        <taxon>Rhodopseudomonas</taxon>
    </lineage>
</organism>
<dbReference type="EC" id="2.5.1.141" evidence="1"/>
<dbReference type="EMBL" id="CP000301">
    <property type="protein sequence ID" value="ABD90311.1"/>
    <property type="molecule type" value="Genomic_DNA"/>
</dbReference>
<dbReference type="SMR" id="Q20X25"/>
<dbReference type="STRING" id="316056.RPC_4789"/>
<dbReference type="KEGG" id="rpc:RPC_4789"/>
<dbReference type="eggNOG" id="COG0109">
    <property type="taxonomic scope" value="Bacteria"/>
</dbReference>
<dbReference type="HOGENOM" id="CLU_029631_0_2_5"/>
<dbReference type="OrthoDB" id="9814417at2"/>
<dbReference type="UniPathway" id="UPA00834">
    <property type="reaction ID" value="UER00712"/>
</dbReference>
<dbReference type="GO" id="GO:0005886">
    <property type="term" value="C:plasma membrane"/>
    <property type="evidence" value="ECO:0007669"/>
    <property type="project" value="UniProtKB-SubCell"/>
</dbReference>
<dbReference type="GO" id="GO:0008495">
    <property type="term" value="F:protoheme IX farnesyltransferase activity"/>
    <property type="evidence" value="ECO:0007669"/>
    <property type="project" value="UniProtKB-UniRule"/>
</dbReference>
<dbReference type="GO" id="GO:0048034">
    <property type="term" value="P:heme O biosynthetic process"/>
    <property type="evidence" value="ECO:0007669"/>
    <property type="project" value="UniProtKB-UniRule"/>
</dbReference>
<dbReference type="CDD" id="cd13957">
    <property type="entry name" value="PT_UbiA_Cox10"/>
    <property type="match status" value="1"/>
</dbReference>
<dbReference type="FunFam" id="1.10.357.140:FF:000001">
    <property type="entry name" value="Protoheme IX farnesyltransferase"/>
    <property type="match status" value="1"/>
</dbReference>
<dbReference type="Gene3D" id="1.10.357.140">
    <property type="entry name" value="UbiA prenyltransferase"/>
    <property type="match status" value="1"/>
</dbReference>
<dbReference type="HAMAP" id="MF_00154">
    <property type="entry name" value="CyoE_CtaB"/>
    <property type="match status" value="1"/>
</dbReference>
<dbReference type="InterPro" id="IPR006369">
    <property type="entry name" value="Protohaem_IX_farnesylTrfase"/>
</dbReference>
<dbReference type="InterPro" id="IPR000537">
    <property type="entry name" value="UbiA_prenyltransferase"/>
</dbReference>
<dbReference type="InterPro" id="IPR030470">
    <property type="entry name" value="UbiA_prenylTrfase_CS"/>
</dbReference>
<dbReference type="InterPro" id="IPR044878">
    <property type="entry name" value="UbiA_sf"/>
</dbReference>
<dbReference type="NCBIfam" id="TIGR01473">
    <property type="entry name" value="cyoE_ctaB"/>
    <property type="match status" value="1"/>
</dbReference>
<dbReference type="NCBIfam" id="NF003349">
    <property type="entry name" value="PRK04375.1-2"/>
    <property type="match status" value="1"/>
</dbReference>
<dbReference type="PANTHER" id="PTHR43448:SF7">
    <property type="entry name" value="4-HYDROXYBENZOATE SOLANESYLTRANSFERASE"/>
    <property type="match status" value="1"/>
</dbReference>
<dbReference type="PANTHER" id="PTHR43448">
    <property type="entry name" value="PROTOHEME IX FARNESYLTRANSFERASE, MITOCHONDRIAL"/>
    <property type="match status" value="1"/>
</dbReference>
<dbReference type="Pfam" id="PF01040">
    <property type="entry name" value="UbiA"/>
    <property type="match status" value="1"/>
</dbReference>
<dbReference type="PROSITE" id="PS00943">
    <property type="entry name" value="UBIA"/>
    <property type="match status" value="1"/>
</dbReference>
<accession>Q20X25</accession>
<gene>
    <name evidence="1" type="primary">ctaB</name>
    <name type="ordered locus">RPC_4789</name>
</gene>
<feature type="chain" id="PRO_0000327141" description="Protoheme IX farnesyltransferase">
    <location>
        <begin position="1"/>
        <end position="313"/>
    </location>
</feature>
<feature type="transmembrane region" description="Helical" evidence="1">
    <location>
        <begin position="35"/>
        <end position="55"/>
    </location>
</feature>
<feature type="transmembrane region" description="Helical" evidence="1">
    <location>
        <begin position="56"/>
        <end position="76"/>
    </location>
</feature>
<feature type="transmembrane region" description="Helical" evidence="1">
    <location>
        <begin position="98"/>
        <end position="118"/>
    </location>
</feature>
<feature type="transmembrane region" description="Helical" evidence="1">
    <location>
        <begin position="120"/>
        <end position="140"/>
    </location>
</feature>
<feature type="transmembrane region" description="Helical" evidence="1">
    <location>
        <begin position="153"/>
        <end position="173"/>
    </location>
</feature>
<feature type="transmembrane region" description="Helical" evidence="1">
    <location>
        <begin position="180"/>
        <end position="200"/>
    </location>
</feature>
<feature type="transmembrane region" description="Helical" evidence="1">
    <location>
        <begin position="226"/>
        <end position="246"/>
    </location>
</feature>
<feature type="transmembrane region" description="Helical" evidence="1">
    <location>
        <begin position="248"/>
        <end position="268"/>
    </location>
</feature>
<feature type="transmembrane region" description="Helical" evidence="1">
    <location>
        <begin position="285"/>
        <end position="305"/>
    </location>
</feature>
<reference key="1">
    <citation type="submission" date="2006-03" db="EMBL/GenBank/DDBJ databases">
        <title>Complete sequence of Rhodopseudomonas palustris BisB18.</title>
        <authorList>
            <consortium name="US DOE Joint Genome Institute"/>
            <person name="Copeland A."/>
            <person name="Lucas S."/>
            <person name="Lapidus A."/>
            <person name="Barry K."/>
            <person name="Detter J.C."/>
            <person name="Glavina del Rio T."/>
            <person name="Hammon N."/>
            <person name="Israni S."/>
            <person name="Dalin E."/>
            <person name="Tice H."/>
            <person name="Pitluck S."/>
            <person name="Chain P."/>
            <person name="Malfatti S."/>
            <person name="Shin M."/>
            <person name="Vergez L."/>
            <person name="Schmutz J."/>
            <person name="Larimer F."/>
            <person name="Land M."/>
            <person name="Hauser L."/>
            <person name="Pelletier D.A."/>
            <person name="Kyrpides N."/>
            <person name="Anderson I."/>
            <person name="Oda Y."/>
            <person name="Harwood C.S."/>
            <person name="Richardson P."/>
        </authorList>
    </citation>
    <scope>NUCLEOTIDE SEQUENCE [LARGE SCALE GENOMIC DNA]</scope>
    <source>
        <strain>BisB18</strain>
    </source>
</reference>
<proteinExistence type="inferred from homology"/>
<name>COXX_RHOPB</name>
<protein>
    <recommendedName>
        <fullName evidence="1">Protoheme IX farnesyltransferase</fullName>
        <ecNumber evidence="1">2.5.1.141</ecNumber>
    </recommendedName>
    <alternativeName>
        <fullName evidence="1">Heme B farnesyltransferase</fullName>
    </alternativeName>
    <alternativeName>
        <fullName evidence="1">Heme O synthase</fullName>
    </alternativeName>
</protein>
<evidence type="ECO:0000255" key="1">
    <source>
        <dbReference type="HAMAP-Rule" id="MF_00154"/>
    </source>
</evidence>